<evidence type="ECO:0000250" key="1"/>
<evidence type="ECO:0000255" key="2"/>
<evidence type="ECO:0000305" key="3"/>
<organism>
    <name type="scientific">Saccharomyces cerevisiae (strain JAY291)</name>
    <name type="common">Baker's yeast</name>
    <dbReference type="NCBI Taxonomy" id="574961"/>
    <lineage>
        <taxon>Eukaryota</taxon>
        <taxon>Fungi</taxon>
        <taxon>Dikarya</taxon>
        <taxon>Ascomycota</taxon>
        <taxon>Saccharomycotina</taxon>
        <taxon>Saccharomycetes</taxon>
        <taxon>Saccharomycetales</taxon>
        <taxon>Saccharomycetaceae</taxon>
        <taxon>Saccharomyces</taxon>
    </lineage>
</organism>
<dbReference type="EMBL" id="ACFL01000147">
    <property type="protein sequence ID" value="EEU06548.1"/>
    <property type="molecule type" value="Genomic_DNA"/>
</dbReference>
<dbReference type="SMR" id="C7GRM0"/>
<dbReference type="Proteomes" id="UP000008073">
    <property type="component" value="Unassembled WGS sequence"/>
</dbReference>
<dbReference type="GO" id="GO:0005739">
    <property type="term" value="C:mitochondrion"/>
    <property type="evidence" value="ECO:0007669"/>
    <property type="project" value="UniProtKB-SubCell"/>
</dbReference>
<dbReference type="GO" id="GO:0016872">
    <property type="term" value="F:intramolecular lyase activity"/>
    <property type="evidence" value="ECO:0007669"/>
    <property type="project" value="InterPro"/>
</dbReference>
<dbReference type="Gene3D" id="3.50.70.10">
    <property type="match status" value="1"/>
</dbReference>
<dbReference type="InterPro" id="IPR016087">
    <property type="entry name" value="Chalcone_isomerase"/>
</dbReference>
<dbReference type="InterPro" id="IPR016088">
    <property type="entry name" value="Chalcone_isomerase_3-sand"/>
</dbReference>
<dbReference type="InterPro" id="IPR036298">
    <property type="entry name" value="Chalcone_isomerase_sf"/>
</dbReference>
<dbReference type="PANTHER" id="PTHR47284">
    <property type="entry name" value="FATTY-ACID-BINDING PROTEIN 2"/>
    <property type="match status" value="1"/>
</dbReference>
<dbReference type="PANTHER" id="PTHR47284:SF3">
    <property type="entry name" value="FATTY-ACID-BINDING PROTEIN 2"/>
    <property type="match status" value="1"/>
</dbReference>
<dbReference type="Pfam" id="PF16035">
    <property type="entry name" value="Chalcone_2"/>
    <property type="match status" value="1"/>
</dbReference>
<dbReference type="SUPFAM" id="SSF54626">
    <property type="entry name" value="Chalcone isomerase"/>
    <property type="match status" value="1"/>
</dbReference>
<accession>C7GRM0</accession>
<name>AIM18_YEAS2</name>
<feature type="transit peptide" description="Mitochondrion" evidence="2">
    <location>
        <begin position="1"/>
        <end position="72"/>
    </location>
</feature>
<feature type="chain" id="PRO_0000399556" description="Altered inheritance of mitochondria protein 18, mitochondrial">
    <location>
        <begin position="73"/>
        <end position="321"/>
    </location>
</feature>
<comment type="subcellular location">
    <subcellularLocation>
        <location evidence="1">Mitochondrion</location>
    </subcellularLocation>
</comment>
<comment type="similarity">
    <text evidence="3">Belongs to the AIM18/AIM46 family.</text>
</comment>
<sequence>MDRGRCANMLKSLQRTLAKCQKSPSTNHWQCFKRNFTSIRATKYPGRSNSTFHYWPWFAASTLLATSLYYRDRPVENDDKTDAFPSHTESIQVDSSVSDFPLTITALNFPVSTTFKLLGYGQRHVTFLRFKVYALGLYLAENDENLVSDTLNETYLRKYFLDVDDSKTPKENLARLLKRDDSKSVMMIDDLLDSGMRMLAKITPVRNTDFKHLKEGLVKTISKHPDVANNKDTLAKGLSELNDAFSRKGSVRKNDDLIIELLANGALQFSYHDSKNNEFEVMGVVNNQLVGKFLFSQYLCGEKSPSPQAKKTAIDKLITLL</sequence>
<reference key="1">
    <citation type="journal article" date="2009" name="Genome Res.">
        <title>Genome structure of a Saccharomyces cerevisiae strain widely used in bioethanol production.</title>
        <authorList>
            <person name="Argueso J.L."/>
            <person name="Carazzolle M.F."/>
            <person name="Mieczkowski P.A."/>
            <person name="Duarte F.M."/>
            <person name="Netto O.V.C."/>
            <person name="Missawa S.K."/>
            <person name="Galzerani F."/>
            <person name="Costa G.G.L."/>
            <person name="Vidal R.O."/>
            <person name="Noronha M.F."/>
            <person name="Dominska M."/>
            <person name="Andrietta M.G.S."/>
            <person name="Andrietta S.R."/>
            <person name="Cunha A.F."/>
            <person name="Gomes L.H."/>
            <person name="Tavares F.C.A."/>
            <person name="Alcarde A.R."/>
            <person name="Dietrich F.S."/>
            <person name="McCusker J.H."/>
            <person name="Petes T.D."/>
            <person name="Pereira G.A.G."/>
        </authorList>
    </citation>
    <scope>NUCLEOTIDE SEQUENCE [LARGE SCALE GENOMIC DNA]</scope>
    <source>
        <strain>JAY291</strain>
    </source>
</reference>
<keyword id="KW-0496">Mitochondrion</keyword>
<keyword id="KW-0809">Transit peptide</keyword>
<gene>
    <name type="primary">AIM18</name>
    <name type="synonym">FMP22</name>
    <name type="ORF">C1Q_02985</name>
</gene>
<proteinExistence type="inferred from homology"/>
<protein>
    <recommendedName>
        <fullName>Altered inheritance of mitochondria protein 18, mitochondrial</fullName>
    </recommendedName>
</protein>